<dbReference type="EC" id="2.7.11.1"/>
<dbReference type="EMBL" id="CR858091">
    <property type="protein sequence ID" value="CAH90330.1"/>
    <property type="status" value="ALT_FRAME"/>
    <property type="molecule type" value="mRNA"/>
</dbReference>
<dbReference type="RefSeq" id="NP_001125155.1">
    <property type="nucleotide sequence ID" value="NM_001131683.1"/>
</dbReference>
<dbReference type="SMR" id="Q5RD27"/>
<dbReference type="STRING" id="9601.ENSPPYP00000018496"/>
<dbReference type="GeneID" id="100172042"/>
<dbReference type="KEGG" id="pon:100172042"/>
<dbReference type="CTD" id="6732"/>
<dbReference type="eggNOG" id="KOG1290">
    <property type="taxonomic scope" value="Eukaryota"/>
</dbReference>
<dbReference type="InParanoid" id="Q5RD27"/>
<dbReference type="OrthoDB" id="2649at2759"/>
<dbReference type="Proteomes" id="UP000001595">
    <property type="component" value="Unplaced"/>
</dbReference>
<dbReference type="GO" id="GO:0000785">
    <property type="term" value="C:chromatin"/>
    <property type="evidence" value="ECO:0000250"/>
    <property type="project" value="UniProtKB"/>
</dbReference>
<dbReference type="GO" id="GO:0005737">
    <property type="term" value="C:cytoplasm"/>
    <property type="evidence" value="ECO:0000250"/>
    <property type="project" value="UniProtKB"/>
</dbReference>
<dbReference type="GO" id="GO:0005783">
    <property type="term" value="C:endoplasmic reticulum"/>
    <property type="evidence" value="ECO:0007669"/>
    <property type="project" value="UniProtKB-KW"/>
</dbReference>
<dbReference type="GO" id="GO:0016363">
    <property type="term" value="C:nuclear matrix"/>
    <property type="evidence" value="ECO:0007669"/>
    <property type="project" value="UniProtKB-SubCell"/>
</dbReference>
<dbReference type="GO" id="GO:0016607">
    <property type="term" value="C:nuclear speck"/>
    <property type="evidence" value="ECO:0000250"/>
    <property type="project" value="UniProtKB"/>
</dbReference>
<dbReference type="GO" id="GO:0005654">
    <property type="term" value="C:nucleoplasm"/>
    <property type="evidence" value="ECO:0000250"/>
    <property type="project" value="UniProtKB"/>
</dbReference>
<dbReference type="GO" id="GO:0005634">
    <property type="term" value="C:nucleus"/>
    <property type="evidence" value="ECO:0000250"/>
    <property type="project" value="UniProtKB"/>
</dbReference>
<dbReference type="GO" id="GO:0005524">
    <property type="term" value="F:ATP binding"/>
    <property type="evidence" value="ECO:0000250"/>
    <property type="project" value="UniProtKB"/>
</dbReference>
<dbReference type="GO" id="GO:0000287">
    <property type="term" value="F:magnesium ion binding"/>
    <property type="evidence" value="ECO:0000250"/>
    <property type="project" value="UniProtKB"/>
</dbReference>
<dbReference type="GO" id="GO:0106310">
    <property type="term" value="F:protein serine kinase activity"/>
    <property type="evidence" value="ECO:0007669"/>
    <property type="project" value="RHEA"/>
</dbReference>
<dbReference type="GO" id="GO:0004674">
    <property type="term" value="F:protein serine/threonine kinase activity"/>
    <property type="evidence" value="ECO:0000250"/>
    <property type="project" value="UniProtKB"/>
</dbReference>
<dbReference type="GO" id="GO:0030154">
    <property type="term" value="P:cell differentiation"/>
    <property type="evidence" value="ECO:0007669"/>
    <property type="project" value="UniProtKB-KW"/>
</dbReference>
<dbReference type="GO" id="GO:0007059">
    <property type="term" value="P:chromosome segregation"/>
    <property type="evidence" value="ECO:0000250"/>
    <property type="project" value="UniProtKB"/>
</dbReference>
<dbReference type="GO" id="GO:0035556">
    <property type="term" value="P:intracellular signal transduction"/>
    <property type="evidence" value="ECO:0000250"/>
    <property type="project" value="UniProtKB"/>
</dbReference>
<dbReference type="GO" id="GO:0006468">
    <property type="term" value="P:protein phosphorylation"/>
    <property type="evidence" value="ECO:0000250"/>
    <property type="project" value="UniProtKB"/>
</dbReference>
<dbReference type="GO" id="GO:0050684">
    <property type="term" value="P:regulation of mRNA processing"/>
    <property type="evidence" value="ECO:0000250"/>
    <property type="project" value="UniProtKB"/>
</dbReference>
<dbReference type="GO" id="GO:0000245">
    <property type="term" value="P:spliceosomal complex assembly"/>
    <property type="evidence" value="ECO:0007669"/>
    <property type="project" value="TreeGrafter"/>
</dbReference>
<dbReference type="FunFam" id="1.10.510.10:FF:000895">
    <property type="entry name" value="SRSF protein kinase 1"/>
    <property type="match status" value="1"/>
</dbReference>
<dbReference type="FunFam" id="1.10.510.10:FF:000105">
    <property type="entry name" value="SRSF protein kinase 2"/>
    <property type="match status" value="1"/>
</dbReference>
<dbReference type="FunFam" id="3.30.200.20:FF:000163">
    <property type="entry name" value="SRSF protein kinase 2 isoform X1"/>
    <property type="match status" value="1"/>
</dbReference>
<dbReference type="Gene3D" id="3.30.200.20">
    <property type="entry name" value="Phosphorylase Kinase, domain 1"/>
    <property type="match status" value="1"/>
</dbReference>
<dbReference type="Gene3D" id="1.10.510.10">
    <property type="entry name" value="Transferase(Phosphotransferase) domain 1"/>
    <property type="match status" value="2"/>
</dbReference>
<dbReference type="InterPro" id="IPR011009">
    <property type="entry name" value="Kinase-like_dom_sf"/>
</dbReference>
<dbReference type="InterPro" id="IPR000719">
    <property type="entry name" value="Prot_kinase_dom"/>
</dbReference>
<dbReference type="InterPro" id="IPR017441">
    <property type="entry name" value="Protein_kinase_ATP_BS"/>
</dbReference>
<dbReference type="InterPro" id="IPR008271">
    <property type="entry name" value="Ser/Thr_kinase_AS"/>
</dbReference>
<dbReference type="InterPro" id="IPR051334">
    <property type="entry name" value="SRPK"/>
</dbReference>
<dbReference type="PANTHER" id="PTHR47634">
    <property type="entry name" value="PROTEIN KINASE DOMAIN-CONTAINING PROTEIN-RELATED"/>
    <property type="match status" value="1"/>
</dbReference>
<dbReference type="PANTHER" id="PTHR47634:SF4">
    <property type="entry name" value="SRSF PROTEIN KINASE 1"/>
    <property type="match status" value="1"/>
</dbReference>
<dbReference type="Pfam" id="PF00069">
    <property type="entry name" value="Pkinase"/>
    <property type="match status" value="2"/>
</dbReference>
<dbReference type="SMART" id="SM00220">
    <property type="entry name" value="S_TKc"/>
    <property type="match status" value="1"/>
</dbReference>
<dbReference type="SUPFAM" id="SSF56112">
    <property type="entry name" value="Protein kinase-like (PK-like)"/>
    <property type="match status" value="1"/>
</dbReference>
<dbReference type="PROSITE" id="PS00107">
    <property type="entry name" value="PROTEIN_KINASE_ATP"/>
    <property type="match status" value="1"/>
</dbReference>
<dbReference type="PROSITE" id="PS50011">
    <property type="entry name" value="PROTEIN_KINASE_DOM"/>
    <property type="match status" value="1"/>
</dbReference>
<dbReference type="PROSITE" id="PS00108">
    <property type="entry name" value="PROTEIN_KINASE_ST"/>
    <property type="match status" value="1"/>
</dbReference>
<proteinExistence type="evidence at transcript level"/>
<name>SRPK1_PONAB</name>
<evidence type="ECO:0000250" key="1"/>
<evidence type="ECO:0000250" key="2">
    <source>
        <dbReference type="UniProtKB" id="Q96SB4"/>
    </source>
</evidence>
<evidence type="ECO:0000250" key="3">
    <source>
        <dbReference type="UniProtKB" id="Q9UPE1"/>
    </source>
</evidence>
<evidence type="ECO:0000255" key="4">
    <source>
        <dbReference type="PROSITE-ProRule" id="PRU00159"/>
    </source>
</evidence>
<evidence type="ECO:0000255" key="5">
    <source>
        <dbReference type="PROSITE-ProRule" id="PRU10027"/>
    </source>
</evidence>
<evidence type="ECO:0000256" key="6">
    <source>
        <dbReference type="SAM" id="MobiDB-lite"/>
    </source>
</evidence>
<evidence type="ECO:0000305" key="7"/>
<evidence type="ECO:0000312" key="8">
    <source>
        <dbReference type="EMBL" id="CAH90330.1"/>
    </source>
</evidence>
<sequence>MERKVLALQARKKRTKAKKDKAQRKPETQHRGSAPHSESDLPEQEEEILGSDDDEQEDPNDYCKGGYHLVKIGDLFNGRYHVIRKLGWGHFSTVWLSWDIQGKKFVAMKVVKSAEHYTETALDEIRLLKSVRNSDPNDPNREMVVQLLDDFKISGVNGTHICMVFEVLGHHLLKWIIKSNYQGLPLPCVKKIIQQVLQGLDYLHTKCRIIHTDIKPENILLSVNEQYIRRLAAEATEWQRSGAPPPSGSAVSTAPQPKPADKMSKNKKKKLKKKQKRQAELLEKRMQEIEEMEKESGPGQKRPNKQEESESPVERPLKENPPNKMTQEKLEESSTIGQDQTLMERDTEGGAAEINCNGVVEVINYTQNSNNETLRHKEDLHNANDCDVQNLNQESSFLSSQNGDSSTSQETDSCTPITSEVSDTMVCQSSSTVDQSFSEQHISQLQESIRVEIPCEDEQEQEHNGPLDNKGKSTAGNFLVNPLEPKNAEKLKVKIADLGNACWVHKHFTEDIQTRQYRSLEVLIGSGYNTPADIWSTACMAFELATGDYLFEPHSGEEYTRDEDHIALIIELLGKVPRKLIVAGKYSKEFFTKKGDLKHITKLKPWGLFEVLVEKYEWSQEEAAGFTDFLLPMLELIPEKRATAAECLRHPWLNS</sequence>
<accession>Q5RD27</accession>
<reference evidence="8" key="1">
    <citation type="submission" date="2004-11" db="EMBL/GenBank/DDBJ databases">
        <authorList>
            <consortium name="The German cDNA consortium"/>
        </authorList>
    </citation>
    <scope>NUCLEOTIDE SEQUENCE [LARGE SCALE MRNA]</scope>
    <source>
        <tissue evidence="8">Brain cortex</tissue>
    </source>
</reference>
<protein>
    <recommendedName>
        <fullName>SRSF protein kinase 1</fullName>
        <ecNumber>2.7.11.1</ecNumber>
    </recommendedName>
    <alternativeName>
        <fullName>SFRS protein kinase 1</fullName>
    </alternativeName>
    <alternativeName>
        <fullName>Serine/arginine-rich protein-specific kinase 1</fullName>
        <shortName>SR-protein-specific kinase 1</shortName>
    </alternativeName>
</protein>
<gene>
    <name evidence="2" type="primary">SRPK1</name>
</gene>
<keyword id="KW-0067">ATP-binding</keyword>
<keyword id="KW-0158">Chromosome</keyword>
<keyword id="KW-0159">Chromosome partition</keyword>
<keyword id="KW-0963">Cytoplasm</keyword>
<keyword id="KW-0221">Differentiation</keyword>
<keyword id="KW-0256">Endoplasmic reticulum</keyword>
<keyword id="KW-0418">Kinase</keyword>
<keyword id="KW-0492">Microsome</keyword>
<keyword id="KW-0507">mRNA processing</keyword>
<keyword id="KW-0508">mRNA splicing</keyword>
<keyword id="KW-0547">Nucleotide-binding</keyword>
<keyword id="KW-0539">Nucleus</keyword>
<keyword id="KW-0597">Phosphoprotein</keyword>
<keyword id="KW-1185">Reference proteome</keyword>
<keyword id="KW-0723">Serine/threonine-protein kinase</keyword>
<keyword id="KW-0808">Transferase</keyword>
<comment type="function">
    <text>Serine/arginine-rich protein-specific kinase which specifically phosphorylates its substrates at serine residues located in regions rich in arginine/serine dipeptides, known as RS domains and is involved in the phosphorylation of SR splicing factors and the regulation of splicing. Plays a central role in the regulatory network for splicing, controlling the intranuclear distribution of splicing factors in interphase cells and the reorganization of nuclear speckles during mitosis. Can influence additional steps of mRNA maturation, as well as other cellular activities, such as chromatin reorganization in somatic and sperm cells and cell cycle progression. Phosphorylates SFRS2, ZRSR2, LBR and PRM1. Phosphorylates SRSF1 using a directional (C-terminal to N-terminal) and a dual-track mechanism incorporating both processive phosphorylation (in which the kinase stays attached to the substrate after each round of phosphorylation) and distributive phosphorylation steps (in which the kinase and substrate dissociate after each phosphorylation event). The RS domain of SRSF1 binds first to a docking groove in the large lobe of the kinase domain of SRPK1. This induces certain structural changes in SRPK1 and/or RRM2 domain of SRSF1, allowing RRM2 to bind the kinase and initiate phosphorylation. The cycles continue for several phosphorylation steps in a processive manner (steps 1-8) until the last few phosphorylation steps (approximately steps 9-12). During that time, a mechanical stress induces the unfolding of the beta-4 motif in RRM2, which then docks at the docking groove of SRPK1. This also signals RRM2 to begin to dissociate, which facilitates SRSF1 dissociation after phosphorylation is completed. Can mediate hepatitis B virus (HBV) core protein phosphorylation. It plays a negative role in the regulation of HBV replication through a mechanism not involving the phosphorylation of the core protein but by reducing the packaging efficiency of the pregenomic RNA (pgRNA) without affecting the formation of the viral core particles. Can induce splicing of exon 10 in MAPT/TAU.</text>
</comment>
<comment type="catalytic activity">
    <reaction evidence="2">
        <text>L-seryl-[protein] + ATP = O-phospho-L-seryl-[protein] + ADP + H(+)</text>
        <dbReference type="Rhea" id="RHEA:17989"/>
        <dbReference type="Rhea" id="RHEA-COMP:9863"/>
        <dbReference type="Rhea" id="RHEA-COMP:11604"/>
        <dbReference type="ChEBI" id="CHEBI:15378"/>
        <dbReference type="ChEBI" id="CHEBI:29999"/>
        <dbReference type="ChEBI" id="CHEBI:30616"/>
        <dbReference type="ChEBI" id="CHEBI:83421"/>
        <dbReference type="ChEBI" id="CHEBI:456216"/>
        <dbReference type="EC" id="2.7.11.1"/>
    </reaction>
</comment>
<comment type="catalytic activity">
    <reaction evidence="2">
        <text>L-threonyl-[protein] + ATP = O-phospho-L-threonyl-[protein] + ADP + H(+)</text>
        <dbReference type="Rhea" id="RHEA:46608"/>
        <dbReference type="Rhea" id="RHEA-COMP:11060"/>
        <dbReference type="Rhea" id="RHEA-COMP:11605"/>
        <dbReference type="ChEBI" id="CHEBI:15378"/>
        <dbReference type="ChEBI" id="CHEBI:30013"/>
        <dbReference type="ChEBI" id="CHEBI:30616"/>
        <dbReference type="ChEBI" id="CHEBI:61977"/>
        <dbReference type="ChEBI" id="CHEBI:456216"/>
        <dbReference type="EC" id="2.7.11.1"/>
    </reaction>
</comment>
<comment type="cofactor">
    <cofactor evidence="2">
        <name>Mg(2+)</name>
        <dbReference type="ChEBI" id="CHEBI:18420"/>
    </cofactor>
</comment>
<comment type="activity regulation">
    <text evidence="2">Activated by phosphorylation on Ser-51 and Ser-555.</text>
</comment>
<comment type="subunit">
    <text evidence="1">Monomer. Found in a multisubunit complex containing seven proteins, named toposome, which separates entangled circular chromatin DNA during chromosome segregation. Interacts with HHV-1 ICP27 protein. Interacts with DNAJC8 and AHSA1/AHA1 and this mediates formation of a complex with the Hsp70 /Hsp90 machinery. Binds to IGF2BP1, SYNCRIP, HNRNPA2B1 and HNRNPC. Interacts with SAFB/SAFB1 and SAFB2 which inhibits its activity (By similarity).</text>
</comment>
<comment type="subcellular location">
    <subcellularLocation>
        <location evidence="2">Cytoplasm</location>
    </subcellularLocation>
    <subcellularLocation>
        <location evidence="2">Nucleus</location>
        <location evidence="2">Nucleoplasm</location>
    </subcellularLocation>
    <subcellularLocation>
        <location evidence="2">Nucleus matrix</location>
    </subcellularLocation>
    <subcellularLocation>
        <location evidence="2">Microsome</location>
    </subcellularLocation>
    <subcellularLocation>
        <location evidence="2">Nucleus speckle</location>
    </subcellularLocation>
    <subcellularLocation>
        <location evidence="2">Chromosome</location>
    </subcellularLocation>
    <text evidence="2">Shuttles between the nucleus and the cytoplasm. Inhibition of the Hsp90 ATPase activity, osmotic stress and interaction with HHV-1 ICP27 protein can induce its translocation to the nucleus. KAT5/TIP60 inhibits its nuclear translocation. Preferentially localizes to the promoter of gene coding regions.</text>
</comment>
<comment type="similarity">
    <text evidence="7">Belongs to the protein kinase superfamily. CMGC Ser/Thr protein kinase family.</text>
</comment>
<comment type="sequence caution" evidence="7">
    <conflict type="frameshift">
        <sequence resource="EMBL-CDS" id="CAH90330"/>
    </conflict>
</comment>
<feature type="chain" id="PRO_0000086676" description="SRSF protein kinase 1">
    <location>
        <begin position="1"/>
        <end position="655"/>
    </location>
</feature>
<feature type="domain" description="Protein kinase" evidence="4">
    <location>
        <begin position="80"/>
        <end position="653"/>
    </location>
</feature>
<feature type="region of interest" description="Disordered" evidence="6">
    <location>
        <begin position="1"/>
        <end position="57"/>
    </location>
</feature>
<feature type="region of interest" description="Disordered" evidence="6">
    <location>
        <begin position="238"/>
        <end position="341"/>
    </location>
</feature>
<feature type="region of interest" description="Disordered" evidence="6">
    <location>
        <begin position="397"/>
        <end position="417"/>
    </location>
</feature>
<feature type="compositionally biased region" description="Basic residues" evidence="6">
    <location>
        <begin position="10"/>
        <end position="22"/>
    </location>
</feature>
<feature type="compositionally biased region" description="Acidic residues" evidence="6">
    <location>
        <begin position="40"/>
        <end position="57"/>
    </location>
</feature>
<feature type="compositionally biased region" description="Basic residues" evidence="6">
    <location>
        <begin position="265"/>
        <end position="276"/>
    </location>
</feature>
<feature type="compositionally biased region" description="Basic and acidic residues" evidence="6">
    <location>
        <begin position="277"/>
        <end position="288"/>
    </location>
</feature>
<feature type="compositionally biased region" description="Basic and acidic residues" evidence="6">
    <location>
        <begin position="304"/>
        <end position="318"/>
    </location>
</feature>
<feature type="active site" description="Proton acceptor" evidence="3 4 5">
    <location>
        <position position="213"/>
    </location>
</feature>
<feature type="binding site" evidence="3 4">
    <location>
        <begin position="86"/>
        <end position="94"/>
    </location>
    <ligand>
        <name>ATP</name>
        <dbReference type="ChEBI" id="CHEBI:30616"/>
    </ligand>
</feature>
<feature type="binding site" evidence="3 4">
    <location>
        <position position="109"/>
    </location>
    <ligand>
        <name>ATP</name>
        <dbReference type="ChEBI" id="CHEBI:30616"/>
    </ligand>
</feature>
<feature type="modified residue" description="Phosphoserine; by CK2" evidence="2">
    <location>
        <position position="51"/>
    </location>
</feature>
<feature type="modified residue" description="Phosphoserine" evidence="2">
    <location>
        <position position="309"/>
    </location>
</feature>
<feature type="modified residue" description="Phosphoserine" evidence="2">
    <location>
        <position position="311"/>
    </location>
</feature>
<feature type="modified residue" description="Phosphoserine" evidence="2">
    <location>
        <position position="333"/>
    </location>
</feature>
<feature type="modified residue" description="Phosphoserine; by CK2" evidence="2">
    <location>
        <position position="555"/>
    </location>
</feature>
<organism>
    <name type="scientific">Pongo abelii</name>
    <name type="common">Sumatran orangutan</name>
    <name type="synonym">Pongo pygmaeus abelii</name>
    <dbReference type="NCBI Taxonomy" id="9601"/>
    <lineage>
        <taxon>Eukaryota</taxon>
        <taxon>Metazoa</taxon>
        <taxon>Chordata</taxon>
        <taxon>Craniata</taxon>
        <taxon>Vertebrata</taxon>
        <taxon>Euteleostomi</taxon>
        <taxon>Mammalia</taxon>
        <taxon>Eutheria</taxon>
        <taxon>Euarchontoglires</taxon>
        <taxon>Primates</taxon>
        <taxon>Haplorrhini</taxon>
        <taxon>Catarrhini</taxon>
        <taxon>Hominidae</taxon>
        <taxon>Pongo</taxon>
    </lineage>
</organism>